<gene>
    <name evidence="1" type="primary">dnaJ</name>
    <name type="ordered locus">PSPA7_5480</name>
</gene>
<comment type="function">
    <text evidence="1">Participates actively in the response to hyperosmotic and heat shock by preventing the aggregation of stress-denatured proteins and by disaggregating proteins, also in an autonomous, DnaK-independent fashion. Unfolded proteins bind initially to DnaJ; upon interaction with the DnaJ-bound protein, DnaK hydrolyzes its bound ATP, resulting in the formation of a stable complex. GrpE releases ADP from DnaK; ATP binding to DnaK triggers the release of the substrate protein, thus completing the reaction cycle. Several rounds of ATP-dependent interactions between DnaJ, DnaK and GrpE are required for fully efficient folding. Also involved, together with DnaK and GrpE, in the DNA replication of plasmids through activation of initiation proteins.</text>
</comment>
<comment type="cofactor">
    <cofactor evidence="1">
        <name>Zn(2+)</name>
        <dbReference type="ChEBI" id="CHEBI:29105"/>
    </cofactor>
    <text evidence="1">Binds 2 Zn(2+) ions per monomer.</text>
</comment>
<comment type="subunit">
    <text evidence="1">Homodimer.</text>
</comment>
<comment type="subcellular location">
    <subcellularLocation>
        <location evidence="1">Cytoplasm</location>
    </subcellularLocation>
</comment>
<comment type="domain">
    <text evidence="1">The J domain is necessary and sufficient to stimulate DnaK ATPase activity. Zinc center 1 plays an important role in the autonomous, DnaK-independent chaperone activity of DnaJ. Zinc center 2 is essential for interaction with DnaK and for DnaJ activity.</text>
</comment>
<comment type="similarity">
    <text evidence="1">Belongs to the DnaJ family.</text>
</comment>
<proteinExistence type="inferred from homology"/>
<protein>
    <recommendedName>
        <fullName evidence="1">Chaperone protein DnaJ</fullName>
    </recommendedName>
</protein>
<accession>A6VCL7</accession>
<name>DNAJ_PSEP7</name>
<feature type="chain" id="PRO_1000085248" description="Chaperone protein DnaJ">
    <location>
        <begin position="1"/>
        <end position="377"/>
    </location>
</feature>
<feature type="domain" description="J" evidence="1">
    <location>
        <begin position="5"/>
        <end position="70"/>
    </location>
</feature>
<feature type="repeat" description="CXXCXGXG motif">
    <location>
        <begin position="149"/>
        <end position="156"/>
    </location>
</feature>
<feature type="repeat" description="CXXCXGXG motif">
    <location>
        <begin position="166"/>
        <end position="173"/>
    </location>
</feature>
<feature type="repeat" description="CXXCXGXG motif">
    <location>
        <begin position="188"/>
        <end position="195"/>
    </location>
</feature>
<feature type="repeat" description="CXXCXGXG motif">
    <location>
        <begin position="202"/>
        <end position="209"/>
    </location>
</feature>
<feature type="zinc finger region" description="CR-type" evidence="1">
    <location>
        <begin position="136"/>
        <end position="214"/>
    </location>
</feature>
<feature type="binding site" evidence="1">
    <location>
        <position position="149"/>
    </location>
    <ligand>
        <name>Zn(2+)</name>
        <dbReference type="ChEBI" id="CHEBI:29105"/>
        <label>1</label>
    </ligand>
</feature>
<feature type="binding site" evidence="1">
    <location>
        <position position="152"/>
    </location>
    <ligand>
        <name>Zn(2+)</name>
        <dbReference type="ChEBI" id="CHEBI:29105"/>
        <label>1</label>
    </ligand>
</feature>
<feature type="binding site" evidence="1">
    <location>
        <position position="166"/>
    </location>
    <ligand>
        <name>Zn(2+)</name>
        <dbReference type="ChEBI" id="CHEBI:29105"/>
        <label>2</label>
    </ligand>
</feature>
<feature type="binding site" evidence="1">
    <location>
        <position position="169"/>
    </location>
    <ligand>
        <name>Zn(2+)</name>
        <dbReference type="ChEBI" id="CHEBI:29105"/>
        <label>2</label>
    </ligand>
</feature>
<feature type="binding site" evidence="1">
    <location>
        <position position="188"/>
    </location>
    <ligand>
        <name>Zn(2+)</name>
        <dbReference type="ChEBI" id="CHEBI:29105"/>
        <label>2</label>
    </ligand>
</feature>
<feature type="binding site" evidence="1">
    <location>
        <position position="191"/>
    </location>
    <ligand>
        <name>Zn(2+)</name>
        <dbReference type="ChEBI" id="CHEBI:29105"/>
        <label>2</label>
    </ligand>
</feature>
<feature type="binding site" evidence="1">
    <location>
        <position position="202"/>
    </location>
    <ligand>
        <name>Zn(2+)</name>
        <dbReference type="ChEBI" id="CHEBI:29105"/>
        <label>1</label>
    </ligand>
</feature>
<feature type="binding site" evidence="1">
    <location>
        <position position="205"/>
    </location>
    <ligand>
        <name>Zn(2+)</name>
        <dbReference type="ChEBI" id="CHEBI:29105"/>
        <label>1</label>
    </ligand>
</feature>
<keyword id="KW-0143">Chaperone</keyword>
<keyword id="KW-0963">Cytoplasm</keyword>
<keyword id="KW-0235">DNA replication</keyword>
<keyword id="KW-0479">Metal-binding</keyword>
<keyword id="KW-0677">Repeat</keyword>
<keyword id="KW-0346">Stress response</keyword>
<keyword id="KW-0862">Zinc</keyword>
<keyword id="KW-0863">Zinc-finger</keyword>
<sequence>MAKRDFYEVLGVERGASEADLKKAYRRLAMKYHPDRNPGDKEAEDKFKEANEAYEVLSDASKRAAYDQYGHAGVDPNMGGGAGAGFGGASFSDIFGDVFSDFFGGGGGRGGARGGAQRGADLRYTLDLDLEEAVRGTTVTIRVPTLVGCKTCNGSGAKPGTTPVTCTTCGGIGQVRMQQGFFSVQQTCPRCHGTGKMISDPCGSCHGQGRVEEQKTLSVKVPAGVDTGDRIRLTGEGEAGSMGGPAGDLYVVVNVREHPIFQRDGKHLYCEVPISFADAALGGELEVPTLDGRVKLKIPESTQTGKLFRLRGKGVAPVRGGGAGDLMCKVVVETPVNLDKRQRELLEEFRKSLQSDTSHSPKASGWFEGMKRFFDDL</sequence>
<organism>
    <name type="scientific">Pseudomonas paraeruginosa (strain DSM 24068 / PA7)</name>
    <name type="common">Pseudomonas aeruginosa (strain PA7)</name>
    <dbReference type="NCBI Taxonomy" id="381754"/>
    <lineage>
        <taxon>Bacteria</taxon>
        <taxon>Pseudomonadati</taxon>
        <taxon>Pseudomonadota</taxon>
        <taxon>Gammaproteobacteria</taxon>
        <taxon>Pseudomonadales</taxon>
        <taxon>Pseudomonadaceae</taxon>
        <taxon>Pseudomonas</taxon>
        <taxon>Pseudomonas paraeruginosa</taxon>
    </lineage>
</organism>
<dbReference type="EMBL" id="CP000744">
    <property type="protein sequence ID" value="ABR81547.1"/>
    <property type="molecule type" value="Genomic_DNA"/>
</dbReference>
<dbReference type="RefSeq" id="WP_003148711.1">
    <property type="nucleotide sequence ID" value="NC_009656.1"/>
</dbReference>
<dbReference type="SMR" id="A6VCL7"/>
<dbReference type="GeneID" id="77223297"/>
<dbReference type="KEGG" id="pap:PSPA7_5480"/>
<dbReference type="HOGENOM" id="CLU_017633_0_7_6"/>
<dbReference type="Proteomes" id="UP000001582">
    <property type="component" value="Chromosome"/>
</dbReference>
<dbReference type="GO" id="GO:0005737">
    <property type="term" value="C:cytoplasm"/>
    <property type="evidence" value="ECO:0007669"/>
    <property type="project" value="UniProtKB-SubCell"/>
</dbReference>
<dbReference type="GO" id="GO:0005524">
    <property type="term" value="F:ATP binding"/>
    <property type="evidence" value="ECO:0007669"/>
    <property type="project" value="InterPro"/>
</dbReference>
<dbReference type="GO" id="GO:0031072">
    <property type="term" value="F:heat shock protein binding"/>
    <property type="evidence" value="ECO:0007669"/>
    <property type="project" value="InterPro"/>
</dbReference>
<dbReference type="GO" id="GO:0051082">
    <property type="term" value="F:unfolded protein binding"/>
    <property type="evidence" value="ECO:0007669"/>
    <property type="project" value="UniProtKB-UniRule"/>
</dbReference>
<dbReference type="GO" id="GO:0008270">
    <property type="term" value="F:zinc ion binding"/>
    <property type="evidence" value="ECO:0007669"/>
    <property type="project" value="UniProtKB-UniRule"/>
</dbReference>
<dbReference type="GO" id="GO:0051085">
    <property type="term" value="P:chaperone cofactor-dependent protein refolding"/>
    <property type="evidence" value="ECO:0007669"/>
    <property type="project" value="TreeGrafter"/>
</dbReference>
<dbReference type="GO" id="GO:0006260">
    <property type="term" value="P:DNA replication"/>
    <property type="evidence" value="ECO:0007669"/>
    <property type="project" value="UniProtKB-KW"/>
</dbReference>
<dbReference type="GO" id="GO:0042026">
    <property type="term" value="P:protein refolding"/>
    <property type="evidence" value="ECO:0007669"/>
    <property type="project" value="TreeGrafter"/>
</dbReference>
<dbReference type="GO" id="GO:0009408">
    <property type="term" value="P:response to heat"/>
    <property type="evidence" value="ECO:0007669"/>
    <property type="project" value="InterPro"/>
</dbReference>
<dbReference type="CDD" id="cd06257">
    <property type="entry name" value="DnaJ"/>
    <property type="match status" value="1"/>
</dbReference>
<dbReference type="CDD" id="cd10747">
    <property type="entry name" value="DnaJ_C"/>
    <property type="match status" value="1"/>
</dbReference>
<dbReference type="CDD" id="cd10719">
    <property type="entry name" value="DnaJ_zf"/>
    <property type="match status" value="1"/>
</dbReference>
<dbReference type="FunFam" id="1.10.287.110:FF:000051">
    <property type="entry name" value="Molecular chaperone DnaJ"/>
    <property type="match status" value="1"/>
</dbReference>
<dbReference type="FunFam" id="2.10.230.10:FF:000002">
    <property type="entry name" value="Molecular chaperone DnaJ"/>
    <property type="match status" value="1"/>
</dbReference>
<dbReference type="FunFam" id="2.60.260.20:FF:000004">
    <property type="entry name" value="Molecular chaperone DnaJ"/>
    <property type="match status" value="1"/>
</dbReference>
<dbReference type="Gene3D" id="1.10.287.110">
    <property type="entry name" value="DnaJ domain"/>
    <property type="match status" value="1"/>
</dbReference>
<dbReference type="Gene3D" id="2.10.230.10">
    <property type="entry name" value="Heat shock protein DnaJ, cysteine-rich domain"/>
    <property type="match status" value="1"/>
</dbReference>
<dbReference type="Gene3D" id="2.60.260.20">
    <property type="entry name" value="Urease metallochaperone UreE, N-terminal domain"/>
    <property type="match status" value="2"/>
</dbReference>
<dbReference type="HAMAP" id="MF_01152">
    <property type="entry name" value="DnaJ"/>
    <property type="match status" value="1"/>
</dbReference>
<dbReference type="InterPro" id="IPR012724">
    <property type="entry name" value="DnaJ"/>
</dbReference>
<dbReference type="InterPro" id="IPR002939">
    <property type="entry name" value="DnaJ_C"/>
</dbReference>
<dbReference type="InterPro" id="IPR001623">
    <property type="entry name" value="DnaJ_domain"/>
</dbReference>
<dbReference type="InterPro" id="IPR018253">
    <property type="entry name" value="DnaJ_domain_CS"/>
</dbReference>
<dbReference type="InterPro" id="IPR008971">
    <property type="entry name" value="HSP40/DnaJ_pept-bd"/>
</dbReference>
<dbReference type="InterPro" id="IPR001305">
    <property type="entry name" value="HSP_DnaJ_Cys-rich_dom"/>
</dbReference>
<dbReference type="InterPro" id="IPR036410">
    <property type="entry name" value="HSP_DnaJ_Cys-rich_dom_sf"/>
</dbReference>
<dbReference type="InterPro" id="IPR036869">
    <property type="entry name" value="J_dom_sf"/>
</dbReference>
<dbReference type="NCBIfam" id="TIGR02349">
    <property type="entry name" value="DnaJ_bact"/>
    <property type="match status" value="1"/>
</dbReference>
<dbReference type="NCBIfam" id="NF008035">
    <property type="entry name" value="PRK10767.1"/>
    <property type="match status" value="1"/>
</dbReference>
<dbReference type="PANTHER" id="PTHR43096:SF48">
    <property type="entry name" value="CHAPERONE PROTEIN DNAJ"/>
    <property type="match status" value="1"/>
</dbReference>
<dbReference type="PANTHER" id="PTHR43096">
    <property type="entry name" value="DNAJ HOMOLOG 1, MITOCHONDRIAL-RELATED"/>
    <property type="match status" value="1"/>
</dbReference>
<dbReference type="Pfam" id="PF00226">
    <property type="entry name" value="DnaJ"/>
    <property type="match status" value="1"/>
</dbReference>
<dbReference type="Pfam" id="PF01556">
    <property type="entry name" value="DnaJ_C"/>
    <property type="match status" value="1"/>
</dbReference>
<dbReference type="Pfam" id="PF00684">
    <property type="entry name" value="DnaJ_CXXCXGXG"/>
    <property type="match status" value="1"/>
</dbReference>
<dbReference type="PRINTS" id="PR00625">
    <property type="entry name" value="JDOMAIN"/>
</dbReference>
<dbReference type="SMART" id="SM00271">
    <property type="entry name" value="DnaJ"/>
    <property type="match status" value="1"/>
</dbReference>
<dbReference type="SUPFAM" id="SSF46565">
    <property type="entry name" value="Chaperone J-domain"/>
    <property type="match status" value="1"/>
</dbReference>
<dbReference type="SUPFAM" id="SSF57938">
    <property type="entry name" value="DnaJ/Hsp40 cysteine-rich domain"/>
    <property type="match status" value="1"/>
</dbReference>
<dbReference type="SUPFAM" id="SSF49493">
    <property type="entry name" value="HSP40/DnaJ peptide-binding domain"/>
    <property type="match status" value="2"/>
</dbReference>
<dbReference type="PROSITE" id="PS00636">
    <property type="entry name" value="DNAJ_1"/>
    <property type="match status" value="1"/>
</dbReference>
<dbReference type="PROSITE" id="PS50076">
    <property type="entry name" value="DNAJ_2"/>
    <property type="match status" value="1"/>
</dbReference>
<dbReference type="PROSITE" id="PS51188">
    <property type="entry name" value="ZF_CR"/>
    <property type="match status" value="1"/>
</dbReference>
<reference key="1">
    <citation type="submission" date="2007-06" db="EMBL/GenBank/DDBJ databases">
        <authorList>
            <person name="Dodson R.J."/>
            <person name="Harkins D."/>
            <person name="Paulsen I.T."/>
        </authorList>
    </citation>
    <scope>NUCLEOTIDE SEQUENCE [LARGE SCALE GENOMIC DNA]</scope>
    <source>
        <strain>DSM 24068 / PA7</strain>
    </source>
</reference>
<evidence type="ECO:0000255" key="1">
    <source>
        <dbReference type="HAMAP-Rule" id="MF_01152"/>
    </source>
</evidence>